<evidence type="ECO:0000255" key="1">
    <source>
        <dbReference type="HAMAP-Rule" id="MF_00006"/>
    </source>
</evidence>
<sequence>MALWGGRFQGETSALFKLFNDSLPVDYRLFEQDVVGSIAWADAIASVGIITATECSDLKKALNELLVEVKGDPAIILASGAEDIHSFVESALIAKVGDLGKKLHTGRSRNDQVATDLKLWCQSEGAALVARLQTLRSELIALAEREFDAVMPGYTHLQRAQPVTFGHWCLAYVEMIERDLSRLTDALKRANTCPLGSGALAGTAYQMDRHSLAVALNFASPTLNSLDSVSDRDHVVELCGAASISMMHLSRMAEDLIFFNSGEAGFISLSDEVTSGSSLMPQKKNPDALELIRGKTGRVYGSLVGILTTMKALPLAYNKDMQEDKEGLFDVVDSWAICLDMAALVLSGLVVNRPNALLAAQQGYANATELADYLVSKGMPFREAHHVVGVAVVAAIAKKIPLEAFSLAEFRTFADIIEADVYPNLTIEACLAKRDVLGGTALTQVKQAIAAKKVI</sequence>
<gene>
    <name evidence="1" type="primary">argH</name>
    <name type="ordered locus">Shewmr7_0240</name>
</gene>
<protein>
    <recommendedName>
        <fullName evidence="1">Argininosuccinate lyase</fullName>
        <shortName evidence="1">ASAL</shortName>
        <ecNumber evidence="1">4.3.2.1</ecNumber>
    </recommendedName>
    <alternativeName>
        <fullName evidence="1">Arginosuccinase</fullName>
    </alternativeName>
</protein>
<name>ARLY_SHESR</name>
<organism>
    <name type="scientific">Shewanella sp. (strain MR-7)</name>
    <dbReference type="NCBI Taxonomy" id="60481"/>
    <lineage>
        <taxon>Bacteria</taxon>
        <taxon>Pseudomonadati</taxon>
        <taxon>Pseudomonadota</taxon>
        <taxon>Gammaproteobacteria</taxon>
        <taxon>Alteromonadales</taxon>
        <taxon>Shewanellaceae</taxon>
        <taxon>Shewanella</taxon>
    </lineage>
</organism>
<reference key="1">
    <citation type="submission" date="2006-08" db="EMBL/GenBank/DDBJ databases">
        <title>Complete sequence of chromosome 1 of Shewanella sp. MR-7.</title>
        <authorList>
            <person name="Copeland A."/>
            <person name="Lucas S."/>
            <person name="Lapidus A."/>
            <person name="Barry K."/>
            <person name="Detter J.C."/>
            <person name="Glavina del Rio T."/>
            <person name="Hammon N."/>
            <person name="Israni S."/>
            <person name="Dalin E."/>
            <person name="Tice H."/>
            <person name="Pitluck S."/>
            <person name="Kiss H."/>
            <person name="Brettin T."/>
            <person name="Bruce D."/>
            <person name="Han C."/>
            <person name="Tapia R."/>
            <person name="Gilna P."/>
            <person name="Schmutz J."/>
            <person name="Larimer F."/>
            <person name="Land M."/>
            <person name="Hauser L."/>
            <person name="Kyrpides N."/>
            <person name="Mikhailova N."/>
            <person name="Nealson K."/>
            <person name="Konstantinidis K."/>
            <person name="Klappenbach J."/>
            <person name="Tiedje J."/>
            <person name="Richardson P."/>
        </authorList>
    </citation>
    <scope>NUCLEOTIDE SEQUENCE [LARGE SCALE GENOMIC DNA]</scope>
    <source>
        <strain>MR-7</strain>
    </source>
</reference>
<feature type="chain" id="PRO_1000000542" description="Argininosuccinate lyase">
    <location>
        <begin position="1"/>
        <end position="455"/>
    </location>
</feature>
<proteinExistence type="inferred from homology"/>
<keyword id="KW-0028">Amino-acid biosynthesis</keyword>
<keyword id="KW-0055">Arginine biosynthesis</keyword>
<keyword id="KW-0963">Cytoplasm</keyword>
<keyword id="KW-0456">Lyase</keyword>
<accession>Q0I060</accession>
<dbReference type="EC" id="4.3.2.1" evidence="1"/>
<dbReference type="EMBL" id="CP000444">
    <property type="protein sequence ID" value="ABI41245.1"/>
    <property type="molecule type" value="Genomic_DNA"/>
</dbReference>
<dbReference type="SMR" id="Q0I060"/>
<dbReference type="KEGG" id="shm:Shewmr7_0240"/>
<dbReference type="HOGENOM" id="CLU_027272_2_3_6"/>
<dbReference type="UniPathway" id="UPA00068">
    <property type="reaction ID" value="UER00114"/>
</dbReference>
<dbReference type="GO" id="GO:0005829">
    <property type="term" value="C:cytosol"/>
    <property type="evidence" value="ECO:0007669"/>
    <property type="project" value="TreeGrafter"/>
</dbReference>
<dbReference type="GO" id="GO:0004056">
    <property type="term" value="F:argininosuccinate lyase activity"/>
    <property type="evidence" value="ECO:0007669"/>
    <property type="project" value="UniProtKB-UniRule"/>
</dbReference>
<dbReference type="GO" id="GO:0042450">
    <property type="term" value="P:arginine biosynthetic process via ornithine"/>
    <property type="evidence" value="ECO:0007669"/>
    <property type="project" value="InterPro"/>
</dbReference>
<dbReference type="GO" id="GO:0006526">
    <property type="term" value="P:L-arginine biosynthetic process"/>
    <property type="evidence" value="ECO:0007669"/>
    <property type="project" value="UniProtKB-UniRule"/>
</dbReference>
<dbReference type="CDD" id="cd01359">
    <property type="entry name" value="Argininosuccinate_lyase"/>
    <property type="match status" value="1"/>
</dbReference>
<dbReference type="FunFam" id="1.10.40.30:FF:000001">
    <property type="entry name" value="Argininosuccinate lyase"/>
    <property type="match status" value="1"/>
</dbReference>
<dbReference type="FunFam" id="1.20.200.10:FF:000006">
    <property type="entry name" value="Argininosuccinate lyase"/>
    <property type="match status" value="1"/>
</dbReference>
<dbReference type="Gene3D" id="1.10.40.30">
    <property type="entry name" value="Fumarase/aspartase (C-terminal domain)"/>
    <property type="match status" value="1"/>
</dbReference>
<dbReference type="Gene3D" id="1.20.200.10">
    <property type="entry name" value="Fumarase/aspartase (Central domain)"/>
    <property type="match status" value="1"/>
</dbReference>
<dbReference type="Gene3D" id="1.10.275.10">
    <property type="entry name" value="Fumarase/aspartase (N-terminal domain)"/>
    <property type="match status" value="1"/>
</dbReference>
<dbReference type="HAMAP" id="MF_00006">
    <property type="entry name" value="Arg_succ_lyase"/>
    <property type="match status" value="1"/>
</dbReference>
<dbReference type="InterPro" id="IPR029419">
    <property type="entry name" value="Arg_succ_lyase_C"/>
</dbReference>
<dbReference type="InterPro" id="IPR009049">
    <property type="entry name" value="Argininosuccinate_lyase"/>
</dbReference>
<dbReference type="InterPro" id="IPR024083">
    <property type="entry name" value="Fumarase/histidase_N"/>
</dbReference>
<dbReference type="InterPro" id="IPR020557">
    <property type="entry name" value="Fumarate_lyase_CS"/>
</dbReference>
<dbReference type="InterPro" id="IPR000362">
    <property type="entry name" value="Fumarate_lyase_fam"/>
</dbReference>
<dbReference type="InterPro" id="IPR022761">
    <property type="entry name" value="Fumarate_lyase_N"/>
</dbReference>
<dbReference type="InterPro" id="IPR008948">
    <property type="entry name" value="L-Aspartase-like"/>
</dbReference>
<dbReference type="NCBIfam" id="TIGR00838">
    <property type="entry name" value="argH"/>
    <property type="match status" value="1"/>
</dbReference>
<dbReference type="NCBIfam" id="NF008964">
    <property type="entry name" value="PRK12308.1"/>
    <property type="match status" value="1"/>
</dbReference>
<dbReference type="PANTHER" id="PTHR43814">
    <property type="entry name" value="ARGININOSUCCINATE LYASE"/>
    <property type="match status" value="1"/>
</dbReference>
<dbReference type="PANTHER" id="PTHR43814:SF1">
    <property type="entry name" value="ARGININOSUCCINATE LYASE"/>
    <property type="match status" value="1"/>
</dbReference>
<dbReference type="Pfam" id="PF14698">
    <property type="entry name" value="ASL_C2"/>
    <property type="match status" value="1"/>
</dbReference>
<dbReference type="Pfam" id="PF00206">
    <property type="entry name" value="Lyase_1"/>
    <property type="match status" value="1"/>
</dbReference>
<dbReference type="PRINTS" id="PR00145">
    <property type="entry name" value="ARGSUCLYASE"/>
</dbReference>
<dbReference type="PRINTS" id="PR00149">
    <property type="entry name" value="FUMRATELYASE"/>
</dbReference>
<dbReference type="SUPFAM" id="SSF48557">
    <property type="entry name" value="L-aspartase-like"/>
    <property type="match status" value="1"/>
</dbReference>
<dbReference type="PROSITE" id="PS00163">
    <property type="entry name" value="FUMARATE_LYASES"/>
    <property type="match status" value="1"/>
</dbReference>
<comment type="catalytic activity">
    <reaction evidence="1">
        <text>2-(N(omega)-L-arginino)succinate = fumarate + L-arginine</text>
        <dbReference type="Rhea" id="RHEA:24020"/>
        <dbReference type="ChEBI" id="CHEBI:29806"/>
        <dbReference type="ChEBI" id="CHEBI:32682"/>
        <dbReference type="ChEBI" id="CHEBI:57472"/>
        <dbReference type="EC" id="4.3.2.1"/>
    </reaction>
</comment>
<comment type="pathway">
    <text evidence="1">Amino-acid biosynthesis; L-arginine biosynthesis; L-arginine from L-ornithine and carbamoyl phosphate: step 3/3.</text>
</comment>
<comment type="subcellular location">
    <subcellularLocation>
        <location evidence="1">Cytoplasm</location>
    </subcellularLocation>
</comment>
<comment type="similarity">
    <text evidence="1">Belongs to the lyase 1 family. Argininosuccinate lyase subfamily.</text>
</comment>